<keyword id="KW-0328">Glycosyltransferase</keyword>
<keyword id="KW-0460">Magnesium</keyword>
<keyword id="KW-0665">Pyrimidine biosynthesis</keyword>
<keyword id="KW-1185">Reference proteome</keyword>
<keyword id="KW-0808">Transferase</keyword>
<name>PYRE_STAEQ</name>
<dbReference type="EC" id="2.4.2.10" evidence="1"/>
<dbReference type="EMBL" id="CP000029">
    <property type="protein sequence ID" value="AAW54182.1"/>
    <property type="molecule type" value="Genomic_DNA"/>
</dbReference>
<dbReference type="RefSeq" id="WP_002446247.1">
    <property type="nucleotide sequence ID" value="NC_002976.3"/>
</dbReference>
<dbReference type="SMR" id="Q5HPY6"/>
<dbReference type="STRING" id="176279.SERP0771"/>
<dbReference type="KEGG" id="ser:SERP0771"/>
<dbReference type="eggNOG" id="COG0461">
    <property type="taxonomic scope" value="Bacteria"/>
</dbReference>
<dbReference type="HOGENOM" id="CLU_074878_1_1_9"/>
<dbReference type="UniPathway" id="UPA00070">
    <property type="reaction ID" value="UER00119"/>
</dbReference>
<dbReference type="Proteomes" id="UP000000531">
    <property type="component" value="Chromosome"/>
</dbReference>
<dbReference type="GO" id="GO:0000287">
    <property type="term" value="F:magnesium ion binding"/>
    <property type="evidence" value="ECO:0007669"/>
    <property type="project" value="UniProtKB-UniRule"/>
</dbReference>
<dbReference type="GO" id="GO:0004588">
    <property type="term" value="F:orotate phosphoribosyltransferase activity"/>
    <property type="evidence" value="ECO:0007669"/>
    <property type="project" value="UniProtKB-UniRule"/>
</dbReference>
<dbReference type="GO" id="GO:0044205">
    <property type="term" value="P:'de novo' UMP biosynthetic process"/>
    <property type="evidence" value="ECO:0007669"/>
    <property type="project" value="UniProtKB-UniRule"/>
</dbReference>
<dbReference type="GO" id="GO:0019856">
    <property type="term" value="P:pyrimidine nucleobase biosynthetic process"/>
    <property type="evidence" value="ECO:0007669"/>
    <property type="project" value="TreeGrafter"/>
</dbReference>
<dbReference type="CDD" id="cd06223">
    <property type="entry name" value="PRTases_typeI"/>
    <property type="match status" value="1"/>
</dbReference>
<dbReference type="Gene3D" id="3.40.50.2020">
    <property type="match status" value="1"/>
</dbReference>
<dbReference type="HAMAP" id="MF_01208">
    <property type="entry name" value="PyrE"/>
    <property type="match status" value="1"/>
</dbReference>
<dbReference type="InterPro" id="IPR023031">
    <property type="entry name" value="OPRT"/>
</dbReference>
<dbReference type="InterPro" id="IPR004467">
    <property type="entry name" value="Or_phspho_trans_dom"/>
</dbReference>
<dbReference type="InterPro" id="IPR000836">
    <property type="entry name" value="PRibTrfase_dom"/>
</dbReference>
<dbReference type="InterPro" id="IPR029057">
    <property type="entry name" value="PRTase-like"/>
</dbReference>
<dbReference type="NCBIfam" id="TIGR00336">
    <property type="entry name" value="pyrE"/>
    <property type="match status" value="1"/>
</dbReference>
<dbReference type="PANTHER" id="PTHR19278">
    <property type="entry name" value="OROTATE PHOSPHORIBOSYLTRANSFERASE"/>
    <property type="match status" value="1"/>
</dbReference>
<dbReference type="PANTHER" id="PTHR19278:SF9">
    <property type="entry name" value="URIDINE 5'-MONOPHOSPHATE SYNTHASE"/>
    <property type="match status" value="1"/>
</dbReference>
<dbReference type="Pfam" id="PF00156">
    <property type="entry name" value="Pribosyltran"/>
    <property type="match status" value="1"/>
</dbReference>
<dbReference type="SUPFAM" id="SSF53271">
    <property type="entry name" value="PRTase-like"/>
    <property type="match status" value="1"/>
</dbReference>
<dbReference type="PROSITE" id="PS00103">
    <property type="entry name" value="PUR_PYR_PR_TRANSFER"/>
    <property type="match status" value="1"/>
</dbReference>
<gene>
    <name evidence="1" type="primary">pyrE</name>
    <name type="ordered locus">SERP0771</name>
</gene>
<reference key="1">
    <citation type="journal article" date="2005" name="J. Bacteriol.">
        <title>Insights on evolution of virulence and resistance from the complete genome analysis of an early methicillin-resistant Staphylococcus aureus strain and a biofilm-producing methicillin-resistant Staphylococcus epidermidis strain.</title>
        <authorList>
            <person name="Gill S.R."/>
            <person name="Fouts D.E."/>
            <person name="Archer G.L."/>
            <person name="Mongodin E.F."/>
            <person name="DeBoy R.T."/>
            <person name="Ravel J."/>
            <person name="Paulsen I.T."/>
            <person name="Kolonay J.F."/>
            <person name="Brinkac L.M."/>
            <person name="Beanan M.J."/>
            <person name="Dodson R.J."/>
            <person name="Daugherty S.C."/>
            <person name="Madupu R."/>
            <person name="Angiuoli S.V."/>
            <person name="Durkin A.S."/>
            <person name="Haft D.H."/>
            <person name="Vamathevan J.J."/>
            <person name="Khouri H."/>
            <person name="Utterback T.R."/>
            <person name="Lee C."/>
            <person name="Dimitrov G."/>
            <person name="Jiang L."/>
            <person name="Qin H."/>
            <person name="Weidman J."/>
            <person name="Tran K."/>
            <person name="Kang K.H."/>
            <person name="Hance I.R."/>
            <person name="Nelson K.E."/>
            <person name="Fraser C.M."/>
        </authorList>
    </citation>
    <scope>NUCLEOTIDE SEQUENCE [LARGE SCALE GENOMIC DNA]</scope>
    <source>
        <strain>ATCC 35984 / DSM 28319 / BCRC 17069 / CCUG 31568 / BM 3577 / RP62A</strain>
    </source>
</reference>
<comment type="function">
    <text evidence="1">Catalyzes the transfer of a ribosyl phosphate group from 5-phosphoribose 1-diphosphate to orotate, leading to the formation of orotidine monophosphate (OMP).</text>
</comment>
<comment type="catalytic activity">
    <reaction evidence="1">
        <text>orotidine 5'-phosphate + diphosphate = orotate + 5-phospho-alpha-D-ribose 1-diphosphate</text>
        <dbReference type="Rhea" id="RHEA:10380"/>
        <dbReference type="ChEBI" id="CHEBI:30839"/>
        <dbReference type="ChEBI" id="CHEBI:33019"/>
        <dbReference type="ChEBI" id="CHEBI:57538"/>
        <dbReference type="ChEBI" id="CHEBI:58017"/>
        <dbReference type="EC" id="2.4.2.10"/>
    </reaction>
</comment>
<comment type="cofactor">
    <cofactor evidence="1">
        <name>Mg(2+)</name>
        <dbReference type="ChEBI" id="CHEBI:18420"/>
    </cofactor>
</comment>
<comment type="pathway">
    <text evidence="1">Pyrimidine metabolism; UMP biosynthesis via de novo pathway; UMP from orotate: step 1/2.</text>
</comment>
<comment type="subunit">
    <text evidence="1">Homodimer.</text>
</comment>
<comment type="similarity">
    <text evidence="1">Belongs to the purine/pyrimidine phosphoribosyltransferase family. PyrE subfamily.</text>
</comment>
<sequence>MAKNIAKALLDIEAVSLSPNDLFTWSSGIKSPIYCDNRITLGYPEVRNAIRDGLIQLIKEHFSNVEIISGTATAGIPHAAYISEKMELPMNYVRSKSKSHGKQNQIEGAKSENKNVVVVEDLISTGGSSITAVEALEEAGANVLGVVAIFTYGLAKADETFNKAHIPFYTLSDYNELIEVAKDDGKISLNDIQTLVDWRDNLS</sequence>
<protein>
    <recommendedName>
        <fullName evidence="1">Orotate phosphoribosyltransferase</fullName>
        <shortName evidence="1">OPRT</shortName>
        <shortName evidence="1">OPRTase</shortName>
        <ecNumber evidence="1">2.4.2.10</ecNumber>
    </recommendedName>
</protein>
<evidence type="ECO:0000255" key="1">
    <source>
        <dbReference type="HAMAP-Rule" id="MF_01208"/>
    </source>
</evidence>
<accession>Q5HPY6</accession>
<organism>
    <name type="scientific">Staphylococcus epidermidis (strain ATCC 35984 / DSM 28319 / BCRC 17069 / CCUG 31568 / BM 3577 / RP62A)</name>
    <dbReference type="NCBI Taxonomy" id="176279"/>
    <lineage>
        <taxon>Bacteria</taxon>
        <taxon>Bacillati</taxon>
        <taxon>Bacillota</taxon>
        <taxon>Bacilli</taxon>
        <taxon>Bacillales</taxon>
        <taxon>Staphylococcaceae</taxon>
        <taxon>Staphylococcus</taxon>
    </lineage>
</organism>
<proteinExistence type="inferred from homology"/>
<feature type="chain" id="PRO_0000110743" description="Orotate phosphoribosyltransferase">
    <location>
        <begin position="1"/>
        <end position="203"/>
    </location>
</feature>
<feature type="binding site" evidence="1">
    <location>
        <position position="94"/>
    </location>
    <ligand>
        <name>5-phospho-alpha-D-ribose 1-diphosphate</name>
        <dbReference type="ChEBI" id="CHEBI:58017"/>
        <note>ligand shared between dimeric partners</note>
    </ligand>
</feature>
<feature type="binding site" evidence="1">
    <location>
        <position position="98"/>
    </location>
    <ligand>
        <name>5-phospho-alpha-D-ribose 1-diphosphate</name>
        <dbReference type="ChEBI" id="CHEBI:58017"/>
        <note>ligand shared between dimeric partners</note>
    </ligand>
</feature>
<feature type="binding site" evidence="1">
    <location>
        <position position="100"/>
    </location>
    <ligand>
        <name>5-phospho-alpha-D-ribose 1-diphosphate</name>
        <dbReference type="ChEBI" id="CHEBI:58017"/>
        <note>ligand shared between dimeric partners</note>
    </ligand>
</feature>
<feature type="binding site" description="in other chain" evidence="1">
    <location>
        <begin position="120"/>
        <end position="128"/>
    </location>
    <ligand>
        <name>5-phospho-alpha-D-ribose 1-diphosphate</name>
        <dbReference type="ChEBI" id="CHEBI:58017"/>
        <note>ligand shared between dimeric partners</note>
    </ligand>
</feature>
<feature type="binding site" evidence="1">
    <location>
        <position position="124"/>
    </location>
    <ligand>
        <name>orotate</name>
        <dbReference type="ChEBI" id="CHEBI:30839"/>
    </ligand>
</feature>